<feature type="chain" id="PRO_0000112979" description="Ornithine carbamoyltransferase">
    <location>
        <begin position="1"/>
        <end position="333"/>
    </location>
</feature>
<feature type="binding site" evidence="2">
    <location>
        <begin position="57"/>
        <end position="60"/>
    </location>
    <ligand>
        <name>carbamoyl phosphate</name>
        <dbReference type="ChEBI" id="CHEBI:58228"/>
    </ligand>
</feature>
<feature type="binding site" evidence="2">
    <location>
        <position position="83"/>
    </location>
    <ligand>
        <name>carbamoyl phosphate</name>
        <dbReference type="ChEBI" id="CHEBI:58228"/>
    </ligand>
</feature>
<feature type="binding site" evidence="2">
    <location>
        <position position="107"/>
    </location>
    <ligand>
        <name>carbamoyl phosphate</name>
        <dbReference type="ChEBI" id="CHEBI:58228"/>
    </ligand>
</feature>
<feature type="binding site" evidence="2">
    <location>
        <begin position="134"/>
        <end position="137"/>
    </location>
    <ligand>
        <name>carbamoyl phosphate</name>
        <dbReference type="ChEBI" id="CHEBI:58228"/>
    </ligand>
</feature>
<feature type="binding site" evidence="2">
    <location>
        <position position="168"/>
    </location>
    <ligand>
        <name>L-ornithine</name>
        <dbReference type="ChEBI" id="CHEBI:46911"/>
    </ligand>
</feature>
<feature type="binding site" evidence="2">
    <location>
        <position position="232"/>
    </location>
    <ligand>
        <name>L-ornithine</name>
        <dbReference type="ChEBI" id="CHEBI:46911"/>
    </ligand>
</feature>
<feature type="binding site" evidence="2">
    <location>
        <begin position="236"/>
        <end position="237"/>
    </location>
    <ligand>
        <name>L-ornithine</name>
        <dbReference type="ChEBI" id="CHEBI:46911"/>
    </ligand>
</feature>
<feature type="binding site" evidence="2">
    <location>
        <begin position="274"/>
        <end position="275"/>
    </location>
    <ligand>
        <name>carbamoyl phosphate</name>
        <dbReference type="ChEBI" id="CHEBI:58228"/>
    </ligand>
</feature>
<feature type="binding site" evidence="2">
    <location>
        <position position="319"/>
    </location>
    <ligand>
        <name>carbamoyl phosphate</name>
        <dbReference type="ChEBI" id="CHEBI:58228"/>
    </ligand>
</feature>
<organism>
    <name type="scientific">Photobacterium profundum (strain SS9)</name>
    <dbReference type="NCBI Taxonomy" id="298386"/>
    <lineage>
        <taxon>Bacteria</taxon>
        <taxon>Pseudomonadati</taxon>
        <taxon>Pseudomonadota</taxon>
        <taxon>Gammaproteobacteria</taxon>
        <taxon>Vibrionales</taxon>
        <taxon>Vibrionaceae</taxon>
        <taxon>Photobacterium</taxon>
    </lineage>
</organism>
<dbReference type="EC" id="2.1.3.3" evidence="2"/>
<dbReference type="EMBL" id="CR378681">
    <property type="protein sequence ID" value="CAG23771.1"/>
    <property type="molecule type" value="Genomic_DNA"/>
</dbReference>
<dbReference type="RefSeq" id="WP_011221911.1">
    <property type="nucleotide sequence ID" value="NC_006371.1"/>
</dbReference>
<dbReference type="SMR" id="Q6LG09"/>
<dbReference type="STRING" id="298386.PBPRB1924"/>
<dbReference type="KEGG" id="ppr:PBPRB1924"/>
<dbReference type="eggNOG" id="COG0078">
    <property type="taxonomic scope" value="Bacteria"/>
</dbReference>
<dbReference type="HOGENOM" id="CLU_043846_3_1_6"/>
<dbReference type="UniPathway" id="UPA00068">
    <property type="reaction ID" value="UER00112"/>
</dbReference>
<dbReference type="Proteomes" id="UP000000593">
    <property type="component" value="Chromosome 2"/>
</dbReference>
<dbReference type="GO" id="GO:0005737">
    <property type="term" value="C:cytoplasm"/>
    <property type="evidence" value="ECO:0007669"/>
    <property type="project" value="UniProtKB-SubCell"/>
</dbReference>
<dbReference type="GO" id="GO:0016597">
    <property type="term" value="F:amino acid binding"/>
    <property type="evidence" value="ECO:0007669"/>
    <property type="project" value="InterPro"/>
</dbReference>
<dbReference type="GO" id="GO:0004585">
    <property type="term" value="F:ornithine carbamoyltransferase activity"/>
    <property type="evidence" value="ECO:0007669"/>
    <property type="project" value="UniProtKB-UniRule"/>
</dbReference>
<dbReference type="GO" id="GO:0042450">
    <property type="term" value="P:arginine biosynthetic process via ornithine"/>
    <property type="evidence" value="ECO:0007669"/>
    <property type="project" value="TreeGrafter"/>
</dbReference>
<dbReference type="GO" id="GO:0019240">
    <property type="term" value="P:citrulline biosynthetic process"/>
    <property type="evidence" value="ECO:0007669"/>
    <property type="project" value="TreeGrafter"/>
</dbReference>
<dbReference type="GO" id="GO:0006526">
    <property type="term" value="P:L-arginine biosynthetic process"/>
    <property type="evidence" value="ECO:0007669"/>
    <property type="project" value="UniProtKB-UniRule"/>
</dbReference>
<dbReference type="FunFam" id="3.40.50.1370:FF:000004">
    <property type="entry name" value="Ornithine carbamoyltransferase"/>
    <property type="match status" value="1"/>
</dbReference>
<dbReference type="Gene3D" id="3.40.50.1370">
    <property type="entry name" value="Aspartate/ornithine carbamoyltransferase"/>
    <property type="match status" value="2"/>
</dbReference>
<dbReference type="HAMAP" id="MF_01109">
    <property type="entry name" value="OTCase"/>
    <property type="match status" value="1"/>
</dbReference>
<dbReference type="InterPro" id="IPR006132">
    <property type="entry name" value="Asp/Orn_carbamoyltranf_P-bd"/>
</dbReference>
<dbReference type="InterPro" id="IPR006130">
    <property type="entry name" value="Asp/Orn_carbamoylTrfase"/>
</dbReference>
<dbReference type="InterPro" id="IPR036901">
    <property type="entry name" value="Asp/Orn_carbamoylTrfase_sf"/>
</dbReference>
<dbReference type="InterPro" id="IPR006131">
    <property type="entry name" value="Asp_carbamoyltransf_Asp/Orn-bd"/>
</dbReference>
<dbReference type="InterPro" id="IPR002292">
    <property type="entry name" value="Orn/put_carbamltrans"/>
</dbReference>
<dbReference type="InterPro" id="IPR024904">
    <property type="entry name" value="OTCase_ArgI"/>
</dbReference>
<dbReference type="NCBIfam" id="TIGR00658">
    <property type="entry name" value="orni_carb_tr"/>
    <property type="match status" value="1"/>
</dbReference>
<dbReference type="NCBIfam" id="NF003286">
    <property type="entry name" value="PRK04284.1"/>
    <property type="match status" value="1"/>
</dbReference>
<dbReference type="PANTHER" id="PTHR45753:SF2">
    <property type="entry name" value="ORNITHINE CARBAMOYLTRANSFERASE"/>
    <property type="match status" value="1"/>
</dbReference>
<dbReference type="PANTHER" id="PTHR45753">
    <property type="entry name" value="ORNITHINE CARBAMOYLTRANSFERASE, MITOCHONDRIAL"/>
    <property type="match status" value="1"/>
</dbReference>
<dbReference type="Pfam" id="PF00185">
    <property type="entry name" value="OTCace"/>
    <property type="match status" value="1"/>
</dbReference>
<dbReference type="Pfam" id="PF02729">
    <property type="entry name" value="OTCace_N"/>
    <property type="match status" value="1"/>
</dbReference>
<dbReference type="PRINTS" id="PR00100">
    <property type="entry name" value="AOTCASE"/>
</dbReference>
<dbReference type="PRINTS" id="PR00102">
    <property type="entry name" value="OTCASE"/>
</dbReference>
<dbReference type="SUPFAM" id="SSF53671">
    <property type="entry name" value="Aspartate/ornithine carbamoyltransferase"/>
    <property type="match status" value="1"/>
</dbReference>
<dbReference type="PROSITE" id="PS00097">
    <property type="entry name" value="CARBAMOYLTRANSFERASE"/>
    <property type="match status" value="1"/>
</dbReference>
<gene>
    <name evidence="2" type="primary">argF</name>
    <name type="ordered locus">PBPRB1924</name>
</gene>
<accession>Q6LG09</accession>
<protein>
    <recommendedName>
        <fullName evidence="2">Ornithine carbamoyltransferase</fullName>
        <shortName evidence="2">OTCase</shortName>
        <ecNumber evidence="2">2.1.3.3</ecNumber>
    </recommendedName>
</protein>
<proteinExistence type="inferred from homology"/>
<sequence>MSFNLRNRNFLKLLDFTGKEIEHLIALAQDLKHAKYAGTEQQKLKGKNIALIFEKTSTRTRCAFEVAAHDQGAHVTYIGGGSQMGHKESTKDTARVLGRFYDGIEYRGFGQDVVETLGEHAGVPVWNGLTDEWHPTQIIADWMTMLEHGNGKRLNQMKLAYMGDAKNNMGNSLMVGAAKVGMEIRLVGPKAYWPDPALVAECNELCKISGGKIVITDNVQEGVDSVDFIYGDVWVSMGEPEELWATRINDLAPYQVNMSVITATQNPAVKYMHCLPAFHNDETRVGKKIEEKFNMKGLEVTEDVFESSYTICFDEAENRMHSIKAIMVATLGD</sequence>
<reference key="1">
    <citation type="journal article" date="2005" name="Science">
        <title>Life at depth: Photobacterium profundum genome sequence and expression analysis.</title>
        <authorList>
            <person name="Vezzi A."/>
            <person name="Campanaro S."/>
            <person name="D'Angelo M."/>
            <person name="Simonato F."/>
            <person name="Vitulo N."/>
            <person name="Lauro F.M."/>
            <person name="Cestaro A."/>
            <person name="Malacrida G."/>
            <person name="Simionati B."/>
            <person name="Cannata N."/>
            <person name="Romualdi C."/>
            <person name="Bartlett D.H."/>
            <person name="Valle G."/>
        </authorList>
    </citation>
    <scope>NUCLEOTIDE SEQUENCE [LARGE SCALE GENOMIC DNA]</scope>
    <source>
        <strain>ATCC BAA-1253 / SS9</strain>
    </source>
</reference>
<comment type="function">
    <text evidence="1">Reversibly catalyzes the transfer of the carbamoyl group from carbamoyl phosphate (CP) to the N(epsilon) atom of ornithine (ORN) to produce L-citrulline.</text>
</comment>
<comment type="catalytic activity">
    <reaction evidence="2">
        <text>carbamoyl phosphate + L-ornithine = L-citrulline + phosphate + H(+)</text>
        <dbReference type="Rhea" id="RHEA:19513"/>
        <dbReference type="ChEBI" id="CHEBI:15378"/>
        <dbReference type="ChEBI" id="CHEBI:43474"/>
        <dbReference type="ChEBI" id="CHEBI:46911"/>
        <dbReference type="ChEBI" id="CHEBI:57743"/>
        <dbReference type="ChEBI" id="CHEBI:58228"/>
        <dbReference type="EC" id="2.1.3.3"/>
    </reaction>
</comment>
<comment type="pathway">
    <text evidence="2">Amino-acid biosynthesis; L-arginine biosynthesis; L-arginine from L-ornithine and carbamoyl phosphate: step 1/3.</text>
</comment>
<comment type="subcellular location">
    <subcellularLocation>
        <location evidence="2">Cytoplasm</location>
    </subcellularLocation>
</comment>
<comment type="similarity">
    <text evidence="2">Belongs to the aspartate/ornithine carbamoyltransferase superfamily. OTCase family.</text>
</comment>
<keyword id="KW-0028">Amino-acid biosynthesis</keyword>
<keyword id="KW-0055">Arginine biosynthesis</keyword>
<keyword id="KW-0963">Cytoplasm</keyword>
<keyword id="KW-1185">Reference proteome</keyword>
<keyword id="KW-0808">Transferase</keyword>
<evidence type="ECO:0000250" key="1"/>
<evidence type="ECO:0000255" key="2">
    <source>
        <dbReference type="HAMAP-Rule" id="MF_01109"/>
    </source>
</evidence>
<name>OTC_PHOPR</name>